<keyword id="KW-0067">ATP-binding</keyword>
<keyword id="KW-0963">Cytoplasm</keyword>
<keyword id="KW-0547">Nucleotide-binding</keyword>
<keyword id="KW-0813">Transport</keyword>
<organism>
    <name type="scientific">Mycolicibacterium smegmatis (strain MKD8)</name>
    <name type="common">Mycobacterium smegmatis</name>
    <dbReference type="NCBI Taxonomy" id="1214915"/>
    <lineage>
        <taxon>Bacteria</taxon>
        <taxon>Bacillati</taxon>
        <taxon>Actinomycetota</taxon>
        <taxon>Actinomycetes</taxon>
        <taxon>Mycobacteriales</taxon>
        <taxon>Mycobacteriaceae</taxon>
        <taxon>Mycolicibacterium</taxon>
    </lineage>
</organism>
<sequence length="574" mass="62148">MVNHLAGMFGSAVGMMSNSRARALEIFTEITNYDESACDAWVGRIGCGDTDRVTLFRAWYSRSNFGQLAGAAEISMNGVGARIPIGGIYSRDITYPINSPLAITMGFAVHEASEGNYTDAMEALEDAPAAGSEHLVSWVRAVIYGAGQRWTEVIDQVRGAERWPDKFLAAAAGVAHGVAAANLGLFTEADRRLTEANDTPVAQACAPVIAWYLAMARRSQGNEESAQVLLEWLQANFPEPKVTAALRDPAYRLETTTAEKIAARSDPWDPSSVVADTSARDKLLVEAQAELDRQIGLGRVKEQIEAYRAATQMARIRAARGMKVAQTSKHMIFAGPPGTGKTTIARVVANILAGLGVIAEPKLIETSRKDFVAEYEGQSAVKTSKTIDRALGGVLFIDEAYTLVQERNGQTDPFGAEALDTLLARMENDRDRLVVIIAGYSNDIDRLLEVNDGLRSRFATRIEFDSYSPDEIVEISKVIATANDSRLDDTAAKRVLEAATTLSQRSLNGKPALDIAGNGRYARQLVEAGEQNRDMRLARSLDFDSLGVDQLSEINGDDMAAAIASVHSRLNIGE</sequence>
<comment type="function">
    <text evidence="2 3">Part of the ESX-1 / type VII specialized secretion system (T7SS), which exports several proteins including EsxA and EsxB (Probable). Plays a role in DNA conjugation, in both donor and recipient strains (PubMed:18554329). EccA1 exhibits ATPase activity and may provide energy for the export of ESX-1 substrates (By similarity).</text>
</comment>
<comment type="subunit">
    <text evidence="2">Part of the ESX-1 / type VII secretion system (T7SS), which is composed of cytosolic and membrane components (By similarity).</text>
</comment>
<comment type="subcellular location">
    <subcellularLocation>
        <location evidence="1">Cytoplasm</location>
    </subcellularLocation>
</comment>
<comment type="disruption phenotype">
    <text evidence="3">Loss of DNA conjugation when disrupted in recipient strain, strain does not secrete EsxB (PubMed:18554329). Increases efficiency of DNA conjugation when disrupted in donor strain (PubMed:18554329).</text>
</comment>
<comment type="miscellaneous">
    <text evidence="6">DNA conjugation in M.smegmatis is unidirectional with distinct donor and recipient strains; mc(2)155 is a donor strain while MKD8 is a recipient strain. Mutations in a donor strain that alter DNA transfer do not always alter DNA transfer in a recipient strain.</text>
</comment>
<comment type="similarity">
    <text evidence="5">Belongs to the CbxX/CfxQ family.</text>
</comment>
<accession>L8FMA1</accession>
<accession>A0A2U9PH45</accession>
<proteinExistence type="inferred from homology"/>
<dbReference type="EMBL" id="CP027541">
    <property type="protein sequence ID" value="AWT51050.1"/>
    <property type="molecule type" value="Genomic_DNA"/>
</dbReference>
<dbReference type="RefSeq" id="WP_003891386.1">
    <property type="nucleotide sequence ID" value="NZ_CP027541.1"/>
</dbReference>
<dbReference type="SMR" id="L8FMA1"/>
<dbReference type="GeneID" id="93454984"/>
<dbReference type="PATRIC" id="fig|1214915.3.peg.59"/>
<dbReference type="HOGENOM" id="CLU_008749_5_0_11"/>
<dbReference type="Proteomes" id="UP000011200">
    <property type="component" value="Chromosome"/>
</dbReference>
<dbReference type="GO" id="GO:0005737">
    <property type="term" value="C:cytoplasm"/>
    <property type="evidence" value="ECO:0007669"/>
    <property type="project" value="UniProtKB-SubCell"/>
</dbReference>
<dbReference type="GO" id="GO:0005524">
    <property type="term" value="F:ATP binding"/>
    <property type="evidence" value="ECO:0007669"/>
    <property type="project" value="UniProtKB-KW"/>
</dbReference>
<dbReference type="GO" id="GO:0016887">
    <property type="term" value="F:ATP hydrolysis activity"/>
    <property type="evidence" value="ECO:0007669"/>
    <property type="project" value="InterPro"/>
</dbReference>
<dbReference type="CDD" id="cd00009">
    <property type="entry name" value="AAA"/>
    <property type="match status" value="1"/>
</dbReference>
<dbReference type="FunFam" id="3.40.50.300:FF:000216">
    <property type="entry name" value="Type VII secretion ATPase EccA"/>
    <property type="match status" value="1"/>
</dbReference>
<dbReference type="Gene3D" id="1.10.8.60">
    <property type="match status" value="1"/>
</dbReference>
<dbReference type="Gene3D" id="3.40.50.300">
    <property type="entry name" value="P-loop containing nucleotide triphosphate hydrolases"/>
    <property type="match status" value="1"/>
</dbReference>
<dbReference type="Gene3D" id="1.25.40.10">
    <property type="entry name" value="Tetratricopeptide repeat domain"/>
    <property type="match status" value="1"/>
</dbReference>
<dbReference type="InterPro" id="IPR003593">
    <property type="entry name" value="AAA+_ATPase"/>
</dbReference>
<dbReference type="InterPro" id="IPR003959">
    <property type="entry name" value="ATPase_AAA_core"/>
</dbReference>
<dbReference type="InterPro" id="IPR000641">
    <property type="entry name" value="CbxX/CfxQ"/>
</dbReference>
<dbReference type="InterPro" id="IPR050773">
    <property type="entry name" value="CbxX/CfxQ_RuBisCO_ESX"/>
</dbReference>
<dbReference type="InterPro" id="IPR027417">
    <property type="entry name" value="P-loop_NTPase"/>
</dbReference>
<dbReference type="InterPro" id="IPR023835">
    <property type="entry name" value="T7SS_EccA"/>
</dbReference>
<dbReference type="InterPro" id="IPR049078">
    <property type="entry name" value="T7SS_EccA1-like_N"/>
</dbReference>
<dbReference type="InterPro" id="IPR011990">
    <property type="entry name" value="TPR-like_helical_dom_sf"/>
</dbReference>
<dbReference type="NCBIfam" id="TIGR03922">
    <property type="entry name" value="T7SS_EccA"/>
    <property type="match status" value="1"/>
</dbReference>
<dbReference type="PANTHER" id="PTHR43392">
    <property type="entry name" value="AAA-TYPE ATPASE FAMILY PROTEIN / ANKYRIN REPEAT FAMILY PROTEIN"/>
    <property type="match status" value="1"/>
</dbReference>
<dbReference type="PANTHER" id="PTHR43392:SF2">
    <property type="entry name" value="AAA-TYPE ATPASE FAMILY PROTEIN _ ANKYRIN REPEAT FAMILY PROTEIN"/>
    <property type="match status" value="1"/>
</dbReference>
<dbReference type="Pfam" id="PF00004">
    <property type="entry name" value="AAA"/>
    <property type="match status" value="1"/>
</dbReference>
<dbReference type="Pfam" id="PF21545">
    <property type="entry name" value="T7SS_EccA1_N"/>
    <property type="match status" value="1"/>
</dbReference>
<dbReference type="PRINTS" id="PR00819">
    <property type="entry name" value="CBXCFQXSUPER"/>
</dbReference>
<dbReference type="SMART" id="SM00382">
    <property type="entry name" value="AAA"/>
    <property type="match status" value="1"/>
</dbReference>
<dbReference type="SUPFAM" id="SSF52540">
    <property type="entry name" value="P-loop containing nucleoside triphosphate hydrolases"/>
    <property type="match status" value="1"/>
</dbReference>
<evidence type="ECO:0000250" key="1">
    <source>
        <dbReference type="UniProtKB" id="B2HSU9"/>
    </source>
</evidence>
<evidence type="ECO:0000250" key="2">
    <source>
        <dbReference type="UniProtKB" id="P9WPH9"/>
    </source>
</evidence>
<evidence type="ECO:0000269" key="3">
    <source>
    </source>
</evidence>
<evidence type="ECO:0000303" key="4">
    <source>
    </source>
</evidence>
<evidence type="ECO:0000305" key="5"/>
<evidence type="ECO:0000305" key="6">
    <source>
    </source>
</evidence>
<evidence type="ECO:0000312" key="7">
    <source>
        <dbReference type="EMBL" id="AWT51050.1"/>
    </source>
</evidence>
<protein>
    <recommendedName>
        <fullName>ESX-1 secretion system protein EccA1</fullName>
    </recommendedName>
    <alternativeName>
        <fullName>ESX conserved component A1</fullName>
    </alternativeName>
    <alternativeName>
        <fullName evidence="5">Type VII secretion system protein EccA1</fullName>
        <shortName evidence="5">T7SS protein EccA1</shortName>
    </alternativeName>
</protein>
<feature type="chain" id="PRO_0000438311" description="ESX-1 secretion system protein EccA1">
    <location>
        <begin position="1"/>
        <end position="574"/>
    </location>
</feature>
<feature type="binding site" evidence="5">
    <location>
        <begin position="335"/>
        <end position="342"/>
    </location>
    <ligand>
        <name>ATP</name>
        <dbReference type="ChEBI" id="CHEBI:30616"/>
    </ligand>
</feature>
<gene>
    <name evidence="5" type="primary">eccA1</name>
    <name evidence="4" type="ORF">0059</name>
    <name evidence="7" type="ORF">D806_000560</name>
    <name type="ORF">D806_0059</name>
</gene>
<reference key="1">
    <citation type="journal article" date="2013" name="Genome Announc.">
        <title>Draft genome sequence of MKD8, a conjugal recipient Mycobacterium smegmatis strain.</title>
        <authorList>
            <person name="Gray T.A."/>
            <person name="Palumbo M.J."/>
            <person name="Derbyshire K.M."/>
        </authorList>
    </citation>
    <scope>NUCLEOTIDE SEQUENCE [LARGE SCALE GENOMIC DNA]</scope>
    <source>
        <strain>MKD8</strain>
    </source>
</reference>
<reference key="2">
    <citation type="submission" date="2018-03" db="EMBL/GenBank/DDBJ databases">
        <authorList>
            <person name="Derbyshire K."/>
            <person name="Gray T.A."/>
            <person name="Champion M."/>
        </authorList>
    </citation>
    <scope>NUCLEOTIDE SEQUENCE [LARGE SCALE GENOMIC DNA]</scope>
    <source>
        <strain>MKD8</strain>
    </source>
</reference>
<reference key="3">
    <citation type="journal article" date="2008" name="Mol. Microbiol.">
        <title>The specialized secretory apparatus ESX-1 is essential for DNA transfer in Mycobacterium smegmatis.</title>
        <authorList>
            <person name="Coros A."/>
            <person name="Callahan B."/>
            <person name="Battaglioli E."/>
            <person name="Derbyshire K.M."/>
        </authorList>
    </citation>
    <scope>FUNCTION</scope>
    <scope>DISRUPTION PHENOTYPE</scope>
    <source>
        <strain>MKD8</strain>
    </source>
</reference>
<name>ECCA1_MYCSE</name>